<evidence type="ECO:0000255" key="1">
    <source>
        <dbReference type="HAMAP-Rule" id="MF_01343"/>
    </source>
</evidence>
<evidence type="ECO:0000305" key="2"/>
<protein>
    <recommendedName>
        <fullName evidence="1">Small ribosomal subunit protein uS15</fullName>
    </recommendedName>
    <alternativeName>
        <fullName evidence="2">30S ribosomal protein S15</fullName>
    </alternativeName>
</protein>
<comment type="function">
    <text evidence="1">One of the primary rRNA binding proteins, it binds directly to 16S rRNA where it helps nucleate assembly of the platform of the 30S subunit by binding and bridging several RNA helices of the 16S rRNA.</text>
</comment>
<comment type="function">
    <text evidence="1">Forms an intersubunit bridge (bridge B4) with the 23S rRNA of the 50S subunit in the ribosome.</text>
</comment>
<comment type="subunit">
    <text evidence="1">Part of the 30S ribosomal subunit. Forms a bridge to the 50S subunit in the 70S ribosome, contacting the 23S rRNA.</text>
</comment>
<comment type="similarity">
    <text evidence="1">Belongs to the universal ribosomal protein uS15 family.</text>
</comment>
<gene>
    <name evidence="1" type="primary">rpsO</name>
    <name type="ordered locus">CMM_2048</name>
</gene>
<proteinExistence type="inferred from homology"/>
<sequence length="89" mass="10186">MALEADVKKAIIDEYATHPGDTGSPEVQIALLTKRITGLTEHLKEHKHDHHTRRGLLLLVGQRRRLLGYLSNVDIERYRALIARLGIRR</sequence>
<dbReference type="EMBL" id="AM711867">
    <property type="protein sequence ID" value="CAN02111.1"/>
    <property type="molecule type" value="Genomic_DNA"/>
</dbReference>
<dbReference type="RefSeq" id="WP_012038735.1">
    <property type="nucleotide sequence ID" value="NC_009480.1"/>
</dbReference>
<dbReference type="SMR" id="A5CSP0"/>
<dbReference type="GeneID" id="92983793"/>
<dbReference type="KEGG" id="cmi:CMM_2048"/>
<dbReference type="eggNOG" id="COG0184">
    <property type="taxonomic scope" value="Bacteria"/>
</dbReference>
<dbReference type="HOGENOM" id="CLU_148518_0_0_11"/>
<dbReference type="OrthoDB" id="9799262at2"/>
<dbReference type="Proteomes" id="UP000001564">
    <property type="component" value="Chromosome"/>
</dbReference>
<dbReference type="GO" id="GO:0022627">
    <property type="term" value="C:cytosolic small ribosomal subunit"/>
    <property type="evidence" value="ECO:0007669"/>
    <property type="project" value="TreeGrafter"/>
</dbReference>
<dbReference type="GO" id="GO:0019843">
    <property type="term" value="F:rRNA binding"/>
    <property type="evidence" value="ECO:0007669"/>
    <property type="project" value="UniProtKB-UniRule"/>
</dbReference>
<dbReference type="GO" id="GO:0003735">
    <property type="term" value="F:structural constituent of ribosome"/>
    <property type="evidence" value="ECO:0007669"/>
    <property type="project" value="InterPro"/>
</dbReference>
<dbReference type="GO" id="GO:0006412">
    <property type="term" value="P:translation"/>
    <property type="evidence" value="ECO:0007669"/>
    <property type="project" value="UniProtKB-UniRule"/>
</dbReference>
<dbReference type="CDD" id="cd00353">
    <property type="entry name" value="Ribosomal_S15p_S13e"/>
    <property type="match status" value="1"/>
</dbReference>
<dbReference type="FunFam" id="1.10.287.10:FF:000002">
    <property type="entry name" value="30S ribosomal protein S15"/>
    <property type="match status" value="1"/>
</dbReference>
<dbReference type="Gene3D" id="6.10.250.3130">
    <property type="match status" value="1"/>
</dbReference>
<dbReference type="Gene3D" id="1.10.287.10">
    <property type="entry name" value="S15/NS1, RNA-binding"/>
    <property type="match status" value="1"/>
</dbReference>
<dbReference type="HAMAP" id="MF_01343_B">
    <property type="entry name" value="Ribosomal_uS15_B"/>
    <property type="match status" value="1"/>
</dbReference>
<dbReference type="InterPro" id="IPR000589">
    <property type="entry name" value="Ribosomal_uS15"/>
</dbReference>
<dbReference type="InterPro" id="IPR005290">
    <property type="entry name" value="Ribosomal_uS15_bac-type"/>
</dbReference>
<dbReference type="InterPro" id="IPR009068">
    <property type="entry name" value="uS15_NS1_RNA-bd_sf"/>
</dbReference>
<dbReference type="NCBIfam" id="TIGR00952">
    <property type="entry name" value="S15_bact"/>
    <property type="match status" value="1"/>
</dbReference>
<dbReference type="PANTHER" id="PTHR23321">
    <property type="entry name" value="RIBOSOMAL PROTEIN S15, BACTERIAL AND ORGANELLAR"/>
    <property type="match status" value="1"/>
</dbReference>
<dbReference type="PANTHER" id="PTHR23321:SF26">
    <property type="entry name" value="SMALL RIBOSOMAL SUBUNIT PROTEIN US15M"/>
    <property type="match status" value="1"/>
</dbReference>
<dbReference type="Pfam" id="PF00312">
    <property type="entry name" value="Ribosomal_S15"/>
    <property type="match status" value="1"/>
</dbReference>
<dbReference type="SMART" id="SM01387">
    <property type="entry name" value="Ribosomal_S15"/>
    <property type="match status" value="1"/>
</dbReference>
<dbReference type="SUPFAM" id="SSF47060">
    <property type="entry name" value="S15/NS1 RNA-binding domain"/>
    <property type="match status" value="1"/>
</dbReference>
<dbReference type="PROSITE" id="PS00362">
    <property type="entry name" value="RIBOSOMAL_S15"/>
    <property type="match status" value="1"/>
</dbReference>
<organism>
    <name type="scientific">Clavibacter michiganensis subsp. michiganensis (strain NCPPB 382)</name>
    <dbReference type="NCBI Taxonomy" id="443906"/>
    <lineage>
        <taxon>Bacteria</taxon>
        <taxon>Bacillati</taxon>
        <taxon>Actinomycetota</taxon>
        <taxon>Actinomycetes</taxon>
        <taxon>Micrococcales</taxon>
        <taxon>Microbacteriaceae</taxon>
        <taxon>Clavibacter</taxon>
    </lineage>
</organism>
<reference key="1">
    <citation type="journal article" date="2008" name="J. Bacteriol.">
        <title>The genome sequence of the tomato-pathogenic actinomycete Clavibacter michiganensis subsp. michiganensis NCPPB382 reveals a large island involved in pathogenicity.</title>
        <authorList>
            <person name="Gartemann K.-H."/>
            <person name="Abt B."/>
            <person name="Bekel T."/>
            <person name="Burger A."/>
            <person name="Engemann J."/>
            <person name="Fluegel M."/>
            <person name="Gaigalat L."/>
            <person name="Goesmann A."/>
            <person name="Graefen I."/>
            <person name="Kalinowski J."/>
            <person name="Kaup O."/>
            <person name="Kirchner O."/>
            <person name="Krause L."/>
            <person name="Linke B."/>
            <person name="McHardy A."/>
            <person name="Meyer F."/>
            <person name="Pohle S."/>
            <person name="Rueckert C."/>
            <person name="Schneiker S."/>
            <person name="Zellermann E.-M."/>
            <person name="Puehler A."/>
            <person name="Eichenlaub R."/>
            <person name="Kaiser O."/>
            <person name="Bartels D."/>
        </authorList>
    </citation>
    <scope>NUCLEOTIDE SEQUENCE [LARGE SCALE GENOMIC DNA]</scope>
    <source>
        <strain>NCPPB 382</strain>
    </source>
</reference>
<keyword id="KW-0687">Ribonucleoprotein</keyword>
<keyword id="KW-0689">Ribosomal protein</keyword>
<keyword id="KW-0694">RNA-binding</keyword>
<keyword id="KW-0699">rRNA-binding</keyword>
<feature type="chain" id="PRO_1000054774" description="Small ribosomal subunit protein uS15">
    <location>
        <begin position="1"/>
        <end position="89"/>
    </location>
</feature>
<name>RS15_CLAM3</name>
<accession>A5CSP0</accession>